<sequence length="136" mass="15552">MLDQLTLCLLLNFLCANVLANTSVFNPCVSQNELSEYEAHQVMENWPVPPIDRAYKCFLTCVLLDLGLIDERGNVQIDKYMKSGVVDWQWVAIELVTCRIEFSDERDLCELSYGIFNCFKDVKLAAEKYVSISNAK</sequence>
<name>OB57E_DROME</name>
<comment type="function">
    <text evidence="5">Present in the aqueous fluid surrounding olfactory sensory dendrites and are thought to aid in the capture and transport of hydrophobic odorants into and through this fluid.</text>
</comment>
<comment type="similarity">
    <text evidence="2">Belongs to the PBP/GOBP family.</text>
</comment>
<dbReference type="EMBL" id="AB189644">
    <property type="protein sequence ID" value="BAD83886.1"/>
    <property type="molecule type" value="Genomic_DNA"/>
</dbReference>
<dbReference type="EMBL" id="AB189645">
    <property type="protein sequence ID" value="BAD83888.1"/>
    <property type="molecule type" value="Genomic_DNA"/>
</dbReference>
<dbReference type="EMBL" id="AB189646">
    <property type="protein sequence ID" value="BAD83890.1"/>
    <property type="molecule type" value="Genomic_DNA"/>
</dbReference>
<dbReference type="EMBL" id="AB189647">
    <property type="protein sequence ID" value="BAD83892.1"/>
    <property type="molecule type" value="Genomic_DNA"/>
</dbReference>
<dbReference type="EMBL" id="AB189660">
    <property type="protein sequence ID" value="BAD83906.1"/>
    <property type="molecule type" value="Genomic_DNA"/>
</dbReference>
<dbReference type="EMBL" id="AB189666">
    <property type="protein sequence ID" value="BAD83914.1"/>
    <property type="molecule type" value="Genomic_DNA"/>
</dbReference>
<dbReference type="EMBL" id="AB189667">
    <property type="protein sequence ID" value="BAD83916.1"/>
    <property type="molecule type" value="Genomic_DNA"/>
</dbReference>
<dbReference type="EMBL" id="AE013599">
    <property type="protein sequence ID" value="AAF57460.2"/>
    <property type="molecule type" value="Genomic_DNA"/>
</dbReference>
<dbReference type="RefSeq" id="NP_611488.1">
    <property type="nucleotide sequence ID" value="NM_137644.1"/>
</dbReference>
<dbReference type="SMR" id="Q9V938"/>
<dbReference type="FunCoup" id="Q9V938">
    <property type="interactions" value="2"/>
</dbReference>
<dbReference type="STRING" id="7227.FBpp0085577"/>
<dbReference type="CAZy" id="CBM39">
    <property type="family name" value="Carbohydrate-Binding Module Family 39"/>
</dbReference>
<dbReference type="PaxDb" id="7227-FBpp0085577"/>
<dbReference type="DNASU" id="326110"/>
<dbReference type="EnsemblMetazoa" id="FBtr0086265">
    <property type="protein sequence ID" value="FBpp0085577"/>
    <property type="gene ID" value="FBgn0050145"/>
</dbReference>
<dbReference type="GeneID" id="326110"/>
<dbReference type="KEGG" id="dme:Dmel_CG30145"/>
<dbReference type="AGR" id="FB:FBgn0050145"/>
<dbReference type="CTD" id="326110"/>
<dbReference type="FlyBase" id="FBgn0050145">
    <property type="gene designation" value="Obp57e"/>
</dbReference>
<dbReference type="VEuPathDB" id="VectorBase:FBgn0050145"/>
<dbReference type="GeneTree" id="ENSGT00940000176564"/>
<dbReference type="HOGENOM" id="CLU_154821_0_0_1"/>
<dbReference type="InParanoid" id="Q9V938"/>
<dbReference type="OMA" id="VQIDKYM"/>
<dbReference type="OrthoDB" id="7860130at2759"/>
<dbReference type="PhylomeDB" id="Q9V938"/>
<dbReference type="BioGRID-ORCS" id="326110">
    <property type="hits" value="0 hits in 1 CRISPR screen"/>
</dbReference>
<dbReference type="ChiTaRS" id="Obp57d">
    <property type="organism name" value="fly"/>
</dbReference>
<dbReference type="GenomeRNAi" id="326110"/>
<dbReference type="PRO" id="PR:Q9V938"/>
<dbReference type="Proteomes" id="UP000000803">
    <property type="component" value="Chromosome 2R"/>
</dbReference>
<dbReference type="Bgee" id="FBgn0050145">
    <property type="expression patterns" value="Expressed in eo support cell (Drosophila) in multicellular organism and 2 other cell types or tissues"/>
</dbReference>
<dbReference type="ExpressionAtlas" id="Q9V938">
    <property type="expression patterns" value="baseline and differential"/>
</dbReference>
<dbReference type="GO" id="GO:0005576">
    <property type="term" value="C:extracellular region"/>
    <property type="evidence" value="ECO:0000255"/>
    <property type="project" value="FlyBase"/>
</dbReference>
<dbReference type="GO" id="GO:0005615">
    <property type="term" value="C:extracellular space"/>
    <property type="evidence" value="ECO:0000318"/>
    <property type="project" value="GO_Central"/>
</dbReference>
<dbReference type="GO" id="GO:0005549">
    <property type="term" value="F:odorant binding"/>
    <property type="evidence" value="ECO:0000250"/>
    <property type="project" value="FlyBase"/>
</dbReference>
<dbReference type="GO" id="GO:1990834">
    <property type="term" value="P:response to odorant"/>
    <property type="evidence" value="ECO:0000303"/>
    <property type="project" value="UniProtKB"/>
</dbReference>
<dbReference type="GO" id="GO:0007606">
    <property type="term" value="P:sensory perception of chemical stimulus"/>
    <property type="evidence" value="ECO:0000250"/>
    <property type="project" value="FlyBase"/>
</dbReference>
<dbReference type="GO" id="GO:0007608">
    <property type="term" value="P:sensory perception of smell"/>
    <property type="evidence" value="ECO:0000318"/>
    <property type="project" value="GO_Central"/>
</dbReference>
<dbReference type="CDD" id="cd23992">
    <property type="entry name" value="PBP_GOBP"/>
    <property type="match status" value="1"/>
</dbReference>
<dbReference type="FunFam" id="1.10.238.20:FF:000016">
    <property type="entry name" value="Odorant-binding protein 57e"/>
    <property type="match status" value="1"/>
</dbReference>
<dbReference type="Gene3D" id="1.10.238.20">
    <property type="entry name" value="Pheromone/general odorant binding protein domain"/>
    <property type="match status" value="1"/>
</dbReference>
<dbReference type="InterPro" id="IPR006170">
    <property type="entry name" value="PBP/GOBP"/>
</dbReference>
<dbReference type="InterPro" id="IPR036728">
    <property type="entry name" value="PBP_GOBP_sf"/>
</dbReference>
<dbReference type="PANTHER" id="PTHR11857:SF48">
    <property type="entry name" value="GENERAL ODORANT-BINDING PROTEIN 57C-RELATED"/>
    <property type="match status" value="1"/>
</dbReference>
<dbReference type="PANTHER" id="PTHR11857">
    <property type="entry name" value="ODORANT BINDING PROTEIN-RELATED"/>
    <property type="match status" value="1"/>
</dbReference>
<dbReference type="Pfam" id="PF01395">
    <property type="entry name" value="PBP_GOBP"/>
    <property type="match status" value="1"/>
</dbReference>
<dbReference type="SMART" id="SM00708">
    <property type="entry name" value="PhBP"/>
    <property type="match status" value="1"/>
</dbReference>
<dbReference type="SUPFAM" id="SSF47565">
    <property type="entry name" value="Insect pheromone/odorant-binding proteins"/>
    <property type="match status" value="1"/>
</dbReference>
<feature type="signal peptide" evidence="2">
    <location>
        <begin position="1"/>
        <end position="20"/>
    </location>
</feature>
<feature type="chain" id="PRO_0000012576" description="General odorant-binding protein 57e" evidence="2">
    <location>
        <begin position="21"/>
        <end position="136"/>
    </location>
</feature>
<feature type="disulfide bond" evidence="1">
    <location>
        <begin position="28"/>
        <end position="61"/>
    </location>
</feature>
<feature type="disulfide bond" evidence="1">
    <location>
        <begin position="57"/>
        <end position="109"/>
    </location>
</feature>
<feature type="disulfide bond" evidence="1">
    <location>
        <begin position="98"/>
        <end position="118"/>
    </location>
</feature>
<feature type="sequence variant" description="In strain: KY02106G9." evidence="4">
    <original>D</original>
    <variation>N</variation>
    <location>
        <position position="121"/>
    </location>
</feature>
<feature type="sequence variant" description="In strain: KY02106G9, MEL6G59 and KSA2." evidence="4">
    <original>Y</original>
    <variation>N</variation>
    <location>
        <position position="129"/>
    </location>
</feature>
<proteinExistence type="inferred from homology"/>
<reference evidence="7" key="1">
    <citation type="submission" date="2004-09" db="EMBL/GenBank/DDBJ databases">
        <title>A high frequency null mutant of an odrant-binding protein gene, Obp57e, in Drosophila melanogaster.</title>
        <authorList>
            <person name="Takahashi A."/>
            <person name="Takano-Shimizu T."/>
        </authorList>
    </citation>
    <scope>NUCLEOTIDE SEQUENCE [GENOMIC DNA]</scope>
    <scope>VARIANTS ASN-121 AND ASN-129</scope>
    <source>
        <strain evidence="13">KSA2</strain>
        <strain evidence="7">KY02013G20</strain>
        <strain evidence="9">KY02016G18</strain>
        <strain evidence="8">KY02073G20</strain>
        <strain evidence="10">KY02106G9</strain>
        <strain evidence="11">MEL6G59</strain>
        <strain evidence="12">MEL8</strain>
    </source>
</reference>
<reference evidence="5 6" key="2">
    <citation type="journal article" date="2000" name="Science">
        <title>The genome sequence of Drosophila melanogaster.</title>
        <authorList>
            <person name="Adams M.D."/>
            <person name="Celniker S.E."/>
            <person name="Holt R.A."/>
            <person name="Evans C.A."/>
            <person name="Gocayne J.D."/>
            <person name="Amanatides P.G."/>
            <person name="Scherer S.E."/>
            <person name="Li P.W."/>
            <person name="Hoskins R.A."/>
            <person name="Galle R.F."/>
            <person name="George R.A."/>
            <person name="Lewis S.E."/>
            <person name="Richards S."/>
            <person name="Ashburner M."/>
            <person name="Henderson S.N."/>
            <person name="Sutton G.G."/>
            <person name="Wortman J.R."/>
            <person name="Yandell M.D."/>
            <person name="Zhang Q."/>
            <person name="Chen L.X."/>
            <person name="Brandon R.C."/>
            <person name="Rogers Y.-H.C."/>
            <person name="Blazej R.G."/>
            <person name="Champe M."/>
            <person name="Pfeiffer B.D."/>
            <person name="Wan K.H."/>
            <person name="Doyle C."/>
            <person name="Baxter E.G."/>
            <person name="Helt G."/>
            <person name="Nelson C.R."/>
            <person name="Miklos G.L.G."/>
            <person name="Abril J.F."/>
            <person name="Agbayani A."/>
            <person name="An H.-J."/>
            <person name="Andrews-Pfannkoch C."/>
            <person name="Baldwin D."/>
            <person name="Ballew R.M."/>
            <person name="Basu A."/>
            <person name="Baxendale J."/>
            <person name="Bayraktaroglu L."/>
            <person name="Beasley E.M."/>
            <person name="Beeson K.Y."/>
            <person name="Benos P.V."/>
            <person name="Berman B.P."/>
            <person name="Bhandari D."/>
            <person name="Bolshakov S."/>
            <person name="Borkova D."/>
            <person name="Botchan M.R."/>
            <person name="Bouck J."/>
            <person name="Brokstein P."/>
            <person name="Brottier P."/>
            <person name="Burtis K.C."/>
            <person name="Busam D.A."/>
            <person name="Butler H."/>
            <person name="Cadieu E."/>
            <person name="Center A."/>
            <person name="Chandra I."/>
            <person name="Cherry J.M."/>
            <person name="Cawley S."/>
            <person name="Dahlke C."/>
            <person name="Davenport L.B."/>
            <person name="Davies P."/>
            <person name="de Pablos B."/>
            <person name="Delcher A."/>
            <person name="Deng Z."/>
            <person name="Mays A.D."/>
            <person name="Dew I."/>
            <person name="Dietz S.M."/>
            <person name="Dodson K."/>
            <person name="Doup L.E."/>
            <person name="Downes M."/>
            <person name="Dugan-Rocha S."/>
            <person name="Dunkov B.C."/>
            <person name="Dunn P."/>
            <person name="Durbin K.J."/>
            <person name="Evangelista C.C."/>
            <person name="Ferraz C."/>
            <person name="Ferriera S."/>
            <person name="Fleischmann W."/>
            <person name="Fosler C."/>
            <person name="Gabrielian A.E."/>
            <person name="Garg N.S."/>
            <person name="Gelbart W.M."/>
            <person name="Glasser K."/>
            <person name="Glodek A."/>
            <person name="Gong F."/>
            <person name="Gorrell J.H."/>
            <person name="Gu Z."/>
            <person name="Guan P."/>
            <person name="Harris M."/>
            <person name="Harris N.L."/>
            <person name="Harvey D.A."/>
            <person name="Heiman T.J."/>
            <person name="Hernandez J.R."/>
            <person name="Houck J."/>
            <person name="Hostin D."/>
            <person name="Houston K.A."/>
            <person name="Howland T.J."/>
            <person name="Wei M.-H."/>
            <person name="Ibegwam C."/>
            <person name="Jalali M."/>
            <person name="Kalush F."/>
            <person name="Karpen G.H."/>
            <person name="Ke Z."/>
            <person name="Kennison J.A."/>
            <person name="Ketchum K.A."/>
            <person name="Kimmel B.E."/>
            <person name="Kodira C.D."/>
            <person name="Kraft C.L."/>
            <person name="Kravitz S."/>
            <person name="Kulp D."/>
            <person name="Lai Z."/>
            <person name="Lasko P."/>
            <person name="Lei Y."/>
            <person name="Levitsky A.A."/>
            <person name="Li J.H."/>
            <person name="Li Z."/>
            <person name="Liang Y."/>
            <person name="Lin X."/>
            <person name="Liu X."/>
            <person name="Mattei B."/>
            <person name="McIntosh T.C."/>
            <person name="McLeod M.P."/>
            <person name="McPherson D."/>
            <person name="Merkulov G."/>
            <person name="Milshina N.V."/>
            <person name="Mobarry C."/>
            <person name="Morris J."/>
            <person name="Moshrefi A."/>
            <person name="Mount S.M."/>
            <person name="Moy M."/>
            <person name="Murphy B."/>
            <person name="Murphy L."/>
            <person name="Muzny D.M."/>
            <person name="Nelson D.L."/>
            <person name="Nelson D.R."/>
            <person name="Nelson K.A."/>
            <person name="Nixon K."/>
            <person name="Nusskern D.R."/>
            <person name="Pacleb J.M."/>
            <person name="Palazzolo M."/>
            <person name="Pittman G.S."/>
            <person name="Pan S."/>
            <person name="Pollard J."/>
            <person name="Puri V."/>
            <person name="Reese M.G."/>
            <person name="Reinert K."/>
            <person name="Remington K."/>
            <person name="Saunders R.D.C."/>
            <person name="Scheeler F."/>
            <person name="Shen H."/>
            <person name="Shue B.C."/>
            <person name="Siden-Kiamos I."/>
            <person name="Simpson M."/>
            <person name="Skupski M.P."/>
            <person name="Smith T.J."/>
            <person name="Spier E."/>
            <person name="Spradling A.C."/>
            <person name="Stapleton M."/>
            <person name="Strong R."/>
            <person name="Sun E."/>
            <person name="Svirskas R."/>
            <person name="Tector C."/>
            <person name="Turner R."/>
            <person name="Venter E."/>
            <person name="Wang A.H."/>
            <person name="Wang X."/>
            <person name="Wang Z.-Y."/>
            <person name="Wassarman D.A."/>
            <person name="Weinstock G.M."/>
            <person name="Weissenbach J."/>
            <person name="Williams S.M."/>
            <person name="Woodage T."/>
            <person name="Worley K.C."/>
            <person name="Wu D."/>
            <person name="Yang S."/>
            <person name="Yao Q.A."/>
            <person name="Ye J."/>
            <person name="Yeh R.-F."/>
            <person name="Zaveri J.S."/>
            <person name="Zhan M."/>
            <person name="Zhang G."/>
            <person name="Zhao Q."/>
            <person name="Zheng L."/>
            <person name="Zheng X.H."/>
            <person name="Zhong F.N."/>
            <person name="Zhong W."/>
            <person name="Zhou X."/>
            <person name="Zhu S.C."/>
            <person name="Zhu X."/>
            <person name="Smith H.O."/>
            <person name="Gibbs R.A."/>
            <person name="Myers E.W."/>
            <person name="Rubin G.M."/>
            <person name="Venter J.C."/>
        </authorList>
    </citation>
    <scope>NUCLEOTIDE SEQUENCE [LARGE SCALE GENOMIC DNA]</scope>
    <source>
        <strain evidence="3">Berkeley</strain>
    </source>
</reference>
<reference evidence="5 6" key="3">
    <citation type="journal article" date="2002" name="Genome Biol.">
        <title>Annotation of the Drosophila melanogaster euchromatic genome: a systematic review.</title>
        <authorList>
            <person name="Misra S."/>
            <person name="Crosby M.A."/>
            <person name="Mungall C.J."/>
            <person name="Matthews B.B."/>
            <person name="Campbell K.S."/>
            <person name="Hradecky P."/>
            <person name="Huang Y."/>
            <person name="Kaminker J.S."/>
            <person name="Millburn G.H."/>
            <person name="Prochnik S.E."/>
            <person name="Smith C.D."/>
            <person name="Tupy J.L."/>
            <person name="Whitfield E.J."/>
            <person name="Bayraktaroglu L."/>
            <person name="Berman B.P."/>
            <person name="Bettencourt B.R."/>
            <person name="Celniker S.E."/>
            <person name="de Grey A.D.N.J."/>
            <person name="Drysdale R.A."/>
            <person name="Harris N.L."/>
            <person name="Richter J."/>
            <person name="Russo S."/>
            <person name="Schroeder A.J."/>
            <person name="Shu S.Q."/>
            <person name="Stapleton M."/>
            <person name="Yamada C."/>
            <person name="Ashburner M."/>
            <person name="Gelbart W.M."/>
            <person name="Rubin G.M."/>
            <person name="Lewis S.E."/>
        </authorList>
    </citation>
    <scope>GENOME REANNOTATION</scope>
    <source>
        <strain>Berkeley</strain>
    </source>
</reference>
<reference evidence="5" key="4">
    <citation type="journal article" date="2002" name="Gene">
        <title>The odorant-binding proteins of Drosophila melanogaster: annotation and characterization of a divergent gene family.</title>
        <authorList>
            <person name="Graham L.A."/>
            <person name="Davies P.L."/>
        </authorList>
    </citation>
    <scope>IDENTIFICATION</scope>
</reference>
<reference evidence="5" key="5">
    <citation type="journal article" date="2002" name="Genome Res.">
        <title>Genome-wide analysis of the odorant-binding protein gene family in Drosophila melanogaster.</title>
        <authorList>
            <person name="Hekmat-Scafe D.S."/>
            <person name="Scafe C.R."/>
            <person name="McKinney A.J."/>
            <person name="Tanouye M.A."/>
        </authorList>
    </citation>
    <scope>IDENTIFICATION</scope>
</reference>
<evidence type="ECO:0000250" key="1"/>
<evidence type="ECO:0000255" key="2"/>
<evidence type="ECO:0000269" key="3">
    <source>
    </source>
</evidence>
<evidence type="ECO:0000269" key="4">
    <source ref="1"/>
</evidence>
<evidence type="ECO:0000305" key="5"/>
<evidence type="ECO:0000312" key="6">
    <source>
        <dbReference type="EMBL" id="AAF57460.2"/>
    </source>
</evidence>
<evidence type="ECO:0000312" key="7">
    <source>
        <dbReference type="EMBL" id="BAD83886.1"/>
    </source>
</evidence>
<evidence type="ECO:0000312" key="8">
    <source>
        <dbReference type="EMBL" id="BAD83888.1"/>
    </source>
</evidence>
<evidence type="ECO:0000312" key="9">
    <source>
        <dbReference type="EMBL" id="BAD83890.1"/>
    </source>
</evidence>
<evidence type="ECO:0000312" key="10">
    <source>
        <dbReference type="EMBL" id="BAD83892.1"/>
    </source>
</evidence>
<evidence type="ECO:0000312" key="11">
    <source>
        <dbReference type="EMBL" id="BAD83906.1"/>
    </source>
</evidence>
<evidence type="ECO:0000312" key="12">
    <source>
        <dbReference type="EMBL" id="BAD83914.1"/>
    </source>
</evidence>
<evidence type="ECO:0000312" key="13">
    <source>
        <dbReference type="EMBL" id="BAD83916.1"/>
    </source>
</evidence>
<accession>Q9V938</accession>
<accession>Q5KS09</accession>
<accession>Q5KS33</accession>
<organism>
    <name type="scientific">Drosophila melanogaster</name>
    <name type="common">Fruit fly</name>
    <dbReference type="NCBI Taxonomy" id="7227"/>
    <lineage>
        <taxon>Eukaryota</taxon>
        <taxon>Metazoa</taxon>
        <taxon>Ecdysozoa</taxon>
        <taxon>Arthropoda</taxon>
        <taxon>Hexapoda</taxon>
        <taxon>Insecta</taxon>
        <taxon>Pterygota</taxon>
        <taxon>Neoptera</taxon>
        <taxon>Endopterygota</taxon>
        <taxon>Diptera</taxon>
        <taxon>Brachycera</taxon>
        <taxon>Muscomorpha</taxon>
        <taxon>Ephydroidea</taxon>
        <taxon>Drosophilidae</taxon>
        <taxon>Drosophila</taxon>
        <taxon>Sophophora</taxon>
    </lineage>
</organism>
<keyword id="KW-1015">Disulfide bond</keyword>
<keyword id="KW-0552">Olfaction</keyword>
<keyword id="KW-1185">Reference proteome</keyword>
<keyword id="KW-0716">Sensory transduction</keyword>
<keyword id="KW-0732">Signal</keyword>
<keyword id="KW-0813">Transport</keyword>
<protein>
    <recommendedName>
        <fullName>General odorant-binding protein 57e</fullName>
    </recommendedName>
</protein>
<gene>
    <name evidence="6" type="primary">Obp57e</name>
    <name type="ORF">CG30145</name>
</gene>